<feature type="signal peptide" evidence="1">
    <location>
        <begin position="1"/>
        <end position="21"/>
    </location>
</feature>
<feature type="chain" id="PRO_5000279920" description="Long neurotoxin 1">
    <location>
        <begin position="22"/>
        <end position="92"/>
    </location>
</feature>
<feature type="disulfide bond" evidence="1">
    <location>
        <begin position="24"/>
        <end position="42"/>
    </location>
</feature>
<feature type="disulfide bond" evidence="1">
    <location>
        <begin position="35"/>
        <end position="63"/>
    </location>
</feature>
<feature type="disulfide bond" evidence="1">
    <location>
        <begin position="48"/>
        <end position="52"/>
    </location>
</feature>
<feature type="disulfide bond" evidence="1">
    <location>
        <begin position="67"/>
        <end position="79"/>
    </location>
</feature>
<feature type="disulfide bond" evidence="1">
    <location>
        <begin position="80"/>
        <end position="85"/>
    </location>
</feature>
<protein>
    <recommendedName>
        <fullName>Long neurotoxin 1</fullName>
        <shortName>LNTX-1</shortName>
    </recommendedName>
</protein>
<dbReference type="EMBL" id="DQ917512">
    <property type="protein sequence ID" value="ABK63541.1"/>
    <property type="molecule type" value="mRNA"/>
</dbReference>
<dbReference type="SMR" id="A8HDK7"/>
<dbReference type="GO" id="GO:0005576">
    <property type="term" value="C:extracellular region"/>
    <property type="evidence" value="ECO:0007669"/>
    <property type="project" value="UniProtKB-SubCell"/>
</dbReference>
<dbReference type="GO" id="GO:0030550">
    <property type="term" value="F:acetylcholine receptor inhibitor activity"/>
    <property type="evidence" value="ECO:0007669"/>
    <property type="project" value="UniProtKB-KW"/>
</dbReference>
<dbReference type="GO" id="GO:0099106">
    <property type="term" value="F:ion channel regulator activity"/>
    <property type="evidence" value="ECO:0007669"/>
    <property type="project" value="UniProtKB-KW"/>
</dbReference>
<dbReference type="GO" id="GO:0090729">
    <property type="term" value="F:toxin activity"/>
    <property type="evidence" value="ECO:0007669"/>
    <property type="project" value="UniProtKB-KW"/>
</dbReference>
<dbReference type="CDD" id="cd00206">
    <property type="entry name" value="TFP_snake_toxin"/>
    <property type="match status" value="1"/>
</dbReference>
<dbReference type="Gene3D" id="2.10.60.10">
    <property type="entry name" value="CD59"/>
    <property type="match status" value="1"/>
</dbReference>
<dbReference type="InterPro" id="IPR003571">
    <property type="entry name" value="Snake_3FTx"/>
</dbReference>
<dbReference type="InterPro" id="IPR045860">
    <property type="entry name" value="Snake_toxin-like_sf"/>
</dbReference>
<dbReference type="InterPro" id="IPR018354">
    <property type="entry name" value="Snake_toxin_con_site"/>
</dbReference>
<dbReference type="InterPro" id="IPR054131">
    <property type="entry name" value="Toxin_cobra-type"/>
</dbReference>
<dbReference type="Pfam" id="PF21947">
    <property type="entry name" value="Toxin_cobra-type"/>
    <property type="match status" value="1"/>
</dbReference>
<dbReference type="SUPFAM" id="SSF57302">
    <property type="entry name" value="Snake toxin-like"/>
    <property type="match status" value="1"/>
</dbReference>
<dbReference type="PROSITE" id="PS00272">
    <property type="entry name" value="SNAKE_TOXIN"/>
    <property type="match status" value="1"/>
</dbReference>
<accession>A8HDK7</accession>
<organism>
    <name type="scientific">Oxyuranus microlepidotus</name>
    <name type="common">Inland taipan</name>
    <name type="synonym">Diemenia microlepidota</name>
    <dbReference type="NCBI Taxonomy" id="111177"/>
    <lineage>
        <taxon>Eukaryota</taxon>
        <taxon>Metazoa</taxon>
        <taxon>Chordata</taxon>
        <taxon>Craniata</taxon>
        <taxon>Vertebrata</taxon>
        <taxon>Euteleostomi</taxon>
        <taxon>Lepidosauria</taxon>
        <taxon>Squamata</taxon>
        <taxon>Bifurcata</taxon>
        <taxon>Unidentata</taxon>
        <taxon>Episquamata</taxon>
        <taxon>Toxicofera</taxon>
        <taxon>Serpentes</taxon>
        <taxon>Colubroidea</taxon>
        <taxon>Elapidae</taxon>
        <taxon>Hydrophiinae</taxon>
        <taxon>Oxyuranus</taxon>
    </lineage>
</organism>
<proteinExistence type="inferred from homology"/>
<name>3L21_OXYMI</name>
<comment type="function">
    <text evidence="2">Binds with high affinity to muscular (alpha-1/CHRNA1) and neuronal (alpha-7/CHRNA7) nicotinic acetylcholine receptor (nAChR) and inhibits acetylcholine from binding to the receptor, thereby impairing neuromuscular and neuronal transmission.</text>
</comment>
<comment type="subcellular location">
    <subcellularLocation>
        <location evidence="1">Secreted</location>
    </subcellularLocation>
</comment>
<comment type="tissue specificity">
    <text evidence="3">Expressed by the venom gland.</text>
</comment>
<comment type="similarity">
    <text evidence="3">Belongs to the three-finger toxin family. Long-chain subfamily. Type II alpha-neurotoxin sub-subfamily.</text>
</comment>
<reference key="1">
    <citation type="journal article" date="2007" name="Cell. Mol. Life Sci.">
        <title>Distinct activities of novel neurotoxins from Australian venomous snakes for nicotinic acetylcholine receptors.</title>
        <authorList>
            <person name="St Pierre L."/>
            <person name="Fischer H."/>
            <person name="Adams D.J."/>
            <person name="Schenning M."/>
            <person name="Lavidis N."/>
            <person name="de Jersey J."/>
            <person name="Masci P.P."/>
            <person name="Lavin M.F."/>
        </authorList>
    </citation>
    <scope>NUCLEOTIDE SEQUENCE [MRNA]</scope>
    <source>
        <tissue>Venom gland</tissue>
    </source>
</reference>
<evidence type="ECO:0000250" key="1"/>
<evidence type="ECO:0000250" key="2">
    <source>
        <dbReference type="UniProtKB" id="P60615"/>
    </source>
</evidence>
<evidence type="ECO:0000305" key="3"/>
<keyword id="KW-0008">Acetylcholine receptor inhibiting toxin</keyword>
<keyword id="KW-1015">Disulfide bond</keyword>
<keyword id="KW-0872">Ion channel impairing toxin</keyword>
<keyword id="KW-0528">Neurotoxin</keyword>
<keyword id="KW-0629">Postsynaptic neurotoxin</keyword>
<keyword id="KW-0964">Secreted</keyword>
<keyword id="KW-0732">Signal</keyword>
<keyword id="KW-0800">Toxin</keyword>
<sequence length="92" mass="10308">MKTLLLTLVVVTIVCLDLGYTRRCFITPDVRSERCPPGQEVCYTKTWCDGFCGSRGKRVDLGCAATCPTPKKKDIKIICCSKDNCNTFPKWP</sequence>